<comment type="function">
    <text evidence="1">Specifically methylates the uridine in position 2552 of 23S rRNA at the 2'-O position of the ribose in the fully assembled 50S ribosomal subunit.</text>
</comment>
<comment type="catalytic activity">
    <reaction evidence="1">
        <text>uridine(2552) in 23S rRNA + S-adenosyl-L-methionine = 2'-O-methyluridine(2552) in 23S rRNA + S-adenosyl-L-homocysteine + H(+)</text>
        <dbReference type="Rhea" id="RHEA:42720"/>
        <dbReference type="Rhea" id="RHEA-COMP:10202"/>
        <dbReference type="Rhea" id="RHEA-COMP:10203"/>
        <dbReference type="ChEBI" id="CHEBI:15378"/>
        <dbReference type="ChEBI" id="CHEBI:57856"/>
        <dbReference type="ChEBI" id="CHEBI:59789"/>
        <dbReference type="ChEBI" id="CHEBI:65315"/>
        <dbReference type="ChEBI" id="CHEBI:74478"/>
        <dbReference type="EC" id="2.1.1.166"/>
    </reaction>
</comment>
<comment type="subcellular location">
    <subcellularLocation>
        <location evidence="1">Cytoplasm</location>
    </subcellularLocation>
</comment>
<comment type="similarity">
    <text evidence="1">Belongs to the class I-like SAM-binding methyltransferase superfamily. RNA methyltransferase RlmE family.</text>
</comment>
<keyword id="KW-0963">Cytoplasm</keyword>
<keyword id="KW-0489">Methyltransferase</keyword>
<keyword id="KW-1185">Reference proteome</keyword>
<keyword id="KW-0698">rRNA processing</keyword>
<keyword id="KW-0949">S-adenosyl-L-methionine</keyword>
<keyword id="KW-0808">Transferase</keyword>
<feature type="chain" id="PRO_0000300602" description="Ribosomal RNA large subunit methyltransferase E">
    <location>
        <begin position="1"/>
        <end position="196"/>
    </location>
</feature>
<feature type="active site" description="Proton acceptor" evidence="1">
    <location>
        <position position="151"/>
    </location>
</feature>
<feature type="binding site" evidence="1">
    <location>
        <position position="52"/>
    </location>
    <ligand>
        <name>S-adenosyl-L-methionine</name>
        <dbReference type="ChEBI" id="CHEBI:59789"/>
    </ligand>
</feature>
<feature type="binding site" evidence="1">
    <location>
        <position position="54"/>
    </location>
    <ligand>
        <name>S-adenosyl-L-methionine</name>
        <dbReference type="ChEBI" id="CHEBI:59789"/>
    </ligand>
</feature>
<feature type="binding site" evidence="1">
    <location>
        <position position="72"/>
    </location>
    <ligand>
        <name>S-adenosyl-L-methionine</name>
        <dbReference type="ChEBI" id="CHEBI:59789"/>
    </ligand>
</feature>
<feature type="binding site" evidence="1">
    <location>
        <position position="88"/>
    </location>
    <ligand>
        <name>S-adenosyl-L-methionine</name>
        <dbReference type="ChEBI" id="CHEBI:59789"/>
    </ligand>
</feature>
<feature type="binding site" evidence="1">
    <location>
        <position position="111"/>
    </location>
    <ligand>
        <name>S-adenosyl-L-methionine</name>
        <dbReference type="ChEBI" id="CHEBI:59789"/>
    </ligand>
</feature>
<evidence type="ECO:0000255" key="1">
    <source>
        <dbReference type="HAMAP-Rule" id="MF_01547"/>
    </source>
</evidence>
<name>RLME_CENSY</name>
<organism>
    <name type="scientific">Cenarchaeum symbiosum (strain A)</name>
    <dbReference type="NCBI Taxonomy" id="414004"/>
    <lineage>
        <taxon>Archaea</taxon>
        <taxon>Nitrososphaerota</taxon>
        <taxon>Candidatus Cenarchaeales</taxon>
        <taxon>Candidatus Cenarchaeaceae</taxon>
        <taxon>Candidatus Cenarchaeum</taxon>
    </lineage>
</organism>
<protein>
    <recommendedName>
        <fullName evidence="1">Ribosomal RNA large subunit methyltransferase E</fullName>
        <ecNumber evidence="1">2.1.1.166</ecNumber>
    </recommendedName>
    <alternativeName>
        <fullName evidence="1">23S rRNA Um2552 methyltransferase</fullName>
    </alternativeName>
    <alternativeName>
        <fullName evidence="1">rRNA (uridine-2'-O-)-methyltransferase</fullName>
    </alternativeName>
</protein>
<gene>
    <name evidence="1" type="primary">rlmE</name>
    <name evidence="1" type="synonym">rrmJ</name>
    <name type="ordered locus">CENSYa_0562</name>
</gene>
<sequence length="196" mass="21635">MRPLDAKKDHYRKMAREQGYRSRAAYKLKELNKAYRIIGAGFTVLDLGCAPGSWMQVAASAAGNRGTVLGVDLEYAEELNHAESMRGDVEDESLAETVAERLGRADAVICDLSPQVSGNWSVDHARQISLNYAAARIMGRVLAPKGNAVFKVFDGEYAAEFREHMGHMFSKTKSTKPQASRKQSSELYLVCLGFRG</sequence>
<dbReference type="EC" id="2.1.1.166" evidence="1"/>
<dbReference type="EMBL" id="DP000238">
    <property type="protein sequence ID" value="ABK77195.1"/>
    <property type="molecule type" value="Genomic_DNA"/>
</dbReference>
<dbReference type="SMR" id="A0RV28"/>
<dbReference type="STRING" id="414004.CENSYa_0562"/>
<dbReference type="EnsemblBacteria" id="ABK77195">
    <property type="protein sequence ID" value="ABK77195"/>
    <property type="gene ID" value="CENSYa_0562"/>
</dbReference>
<dbReference type="KEGG" id="csy:CENSYa_0562"/>
<dbReference type="PATRIC" id="fig|414004.10.peg.510"/>
<dbReference type="HOGENOM" id="CLU_009422_4_4_2"/>
<dbReference type="Proteomes" id="UP000000758">
    <property type="component" value="Chromosome"/>
</dbReference>
<dbReference type="GO" id="GO:0005737">
    <property type="term" value="C:cytoplasm"/>
    <property type="evidence" value="ECO:0007669"/>
    <property type="project" value="UniProtKB-SubCell"/>
</dbReference>
<dbReference type="GO" id="GO:0008650">
    <property type="term" value="F:rRNA (uridine-2'-O-)-methyltransferase activity"/>
    <property type="evidence" value="ECO:0007669"/>
    <property type="project" value="UniProtKB-UniRule"/>
</dbReference>
<dbReference type="Gene3D" id="3.40.50.150">
    <property type="entry name" value="Vaccinia Virus protein VP39"/>
    <property type="match status" value="1"/>
</dbReference>
<dbReference type="HAMAP" id="MF_01547">
    <property type="entry name" value="RNA_methyltr_E"/>
    <property type="match status" value="1"/>
</dbReference>
<dbReference type="InterPro" id="IPR050082">
    <property type="entry name" value="RNA_methyltr_RlmE"/>
</dbReference>
<dbReference type="InterPro" id="IPR002877">
    <property type="entry name" value="RNA_MeTrfase_FtsJ_dom"/>
</dbReference>
<dbReference type="InterPro" id="IPR015507">
    <property type="entry name" value="rRNA-MeTfrase_E"/>
</dbReference>
<dbReference type="InterPro" id="IPR029063">
    <property type="entry name" value="SAM-dependent_MTases_sf"/>
</dbReference>
<dbReference type="PANTHER" id="PTHR10920:SF13">
    <property type="entry name" value="PRE-RRNA 2'-O-RIBOSE RNA METHYLTRANSFERASE FTSJ3"/>
    <property type="match status" value="1"/>
</dbReference>
<dbReference type="PANTHER" id="PTHR10920">
    <property type="entry name" value="RIBOSOMAL RNA METHYLTRANSFERASE"/>
    <property type="match status" value="1"/>
</dbReference>
<dbReference type="Pfam" id="PF01728">
    <property type="entry name" value="FtsJ"/>
    <property type="match status" value="1"/>
</dbReference>
<dbReference type="PIRSF" id="PIRSF005461">
    <property type="entry name" value="23S_rRNA_mtase"/>
    <property type="match status" value="1"/>
</dbReference>
<dbReference type="SUPFAM" id="SSF53335">
    <property type="entry name" value="S-adenosyl-L-methionine-dependent methyltransferases"/>
    <property type="match status" value="1"/>
</dbReference>
<accession>A0RV28</accession>
<reference key="1">
    <citation type="journal article" date="2006" name="Proc. Natl. Acad. Sci. U.S.A.">
        <title>Genomic analysis of the uncultivated marine crenarchaeote Cenarchaeum symbiosum.</title>
        <authorList>
            <person name="Hallam S.J."/>
            <person name="Konstantinidis K.T."/>
            <person name="Putnam N."/>
            <person name="Schleper C."/>
            <person name="Watanabe Y."/>
            <person name="Sugahara J."/>
            <person name="Preston C."/>
            <person name="de la Torre J."/>
            <person name="Richardson P.M."/>
            <person name="DeLong E.F."/>
        </authorList>
    </citation>
    <scope>NUCLEOTIDE SEQUENCE [LARGE SCALE GENOMIC DNA]</scope>
    <source>
        <strain>A</strain>
    </source>
</reference>
<proteinExistence type="inferred from homology"/>